<gene>
    <name evidence="1" type="primary">sepS</name>
    <name type="ordered locus">UNCMA_02570</name>
    <name type="ORF">RRC273</name>
</gene>
<sequence length="532" mass="60256">MKFDPEQVKLETKEDFDRAWSTSGKYVAQPDSTKDYTIHNEPGKAHPVYDTLNKLREAYINLGFEEMVNPIIIEESDIFRQFNYEALAVLDRVYYIGGLPRPNVGISDERFAQIEQIFGRSLTDSDKETIREILHKYKKGEIEGDDLVADLSAGLQIQDSKVAVMIDHVFPEFKKLEPVCSRKTLRSHMTSGWFITLGAMVDRRTTPLKLFSVDLVFRREQEENADRLRAYHSASCVIMDPDVTVEHGKAVAAGLLRQFGFSQFKFKPDDKRSKYYTPDTQIEVYGYHPALKGSNTKYKDGWVEIATFGIYSATALSQYDIPYPVMNLGLGVERLAMILHQAKDMRDMVYPQFKEEWDLTDAEIARMISMEKHPQTKEGHDIAMAIIATVERNGSAPSPCRFDVWEGTINGKKIKVYLEEKEEGKKLCGGAIMNEAYVYKGDLLGIPLNNPKFAEVAEKGAPTGIRNIDAIANAAARNIEEGVYETTVKMSRAPGDVYVKVDPVALRYIQGKKHKIDFRGPVFTSIKAELIE</sequence>
<keyword id="KW-0030">Aminoacyl-tRNA synthetase</keyword>
<keyword id="KW-0067">ATP-binding</keyword>
<keyword id="KW-0436">Ligase</keyword>
<keyword id="KW-0547">Nucleotide-binding</keyword>
<keyword id="KW-0648">Protein biosynthesis</keyword>
<keyword id="KW-1185">Reference proteome</keyword>
<name>SEPS_METAR</name>
<evidence type="ECO:0000255" key="1">
    <source>
        <dbReference type="HAMAP-Rule" id="MF_01674"/>
    </source>
</evidence>
<dbReference type="EC" id="6.1.1.27" evidence="1"/>
<dbReference type="EMBL" id="AM114193">
    <property type="protein sequence ID" value="CAJ38009.1"/>
    <property type="molecule type" value="Genomic_DNA"/>
</dbReference>
<dbReference type="RefSeq" id="WP_012034586.1">
    <property type="nucleotide sequence ID" value="NC_009464.1"/>
</dbReference>
<dbReference type="SMR" id="Q0W0T4"/>
<dbReference type="STRING" id="351160.RRC273"/>
<dbReference type="GeneID" id="5144596"/>
<dbReference type="KEGG" id="rci:RRC273"/>
<dbReference type="PATRIC" id="fig|351160.9.peg.271"/>
<dbReference type="eggNOG" id="arCOG00411">
    <property type="taxonomic scope" value="Archaea"/>
</dbReference>
<dbReference type="OrthoDB" id="145125at2157"/>
<dbReference type="Proteomes" id="UP000000663">
    <property type="component" value="Chromosome"/>
</dbReference>
<dbReference type="GO" id="GO:0005524">
    <property type="term" value="F:ATP binding"/>
    <property type="evidence" value="ECO:0007669"/>
    <property type="project" value="UniProtKB-UniRule"/>
</dbReference>
<dbReference type="GO" id="GO:0043816">
    <property type="term" value="F:phosphoserine-tRNA(Cys) ligase activity"/>
    <property type="evidence" value="ECO:0007669"/>
    <property type="project" value="UniProtKB-EC"/>
</dbReference>
<dbReference type="GO" id="GO:0000049">
    <property type="term" value="F:tRNA binding"/>
    <property type="evidence" value="ECO:0007669"/>
    <property type="project" value="InterPro"/>
</dbReference>
<dbReference type="GO" id="GO:0006412">
    <property type="term" value="P:translation"/>
    <property type="evidence" value="ECO:0007669"/>
    <property type="project" value="UniProtKB-KW"/>
</dbReference>
<dbReference type="GO" id="GO:0043039">
    <property type="term" value="P:tRNA aminoacylation"/>
    <property type="evidence" value="ECO:0007669"/>
    <property type="project" value="UniProtKB-UniRule"/>
</dbReference>
<dbReference type="Gene3D" id="3.30.930.10">
    <property type="entry name" value="Bira Bifunctional Protein, Domain 2"/>
    <property type="match status" value="1"/>
</dbReference>
<dbReference type="HAMAP" id="MF_01674">
    <property type="entry name" value="Sep_tRNA_synth"/>
    <property type="match status" value="1"/>
</dbReference>
<dbReference type="InterPro" id="IPR006195">
    <property type="entry name" value="aa-tRNA-synth_II"/>
</dbReference>
<dbReference type="InterPro" id="IPR045864">
    <property type="entry name" value="aa-tRNA-synth_II/BPL/LPL"/>
</dbReference>
<dbReference type="InterPro" id="IPR005246">
    <property type="entry name" value="O-Pseryl-tRNA(Cys)_ligase"/>
</dbReference>
<dbReference type="InterPro" id="IPR002319">
    <property type="entry name" value="Phenylalanyl-tRNA_Synthase"/>
</dbReference>
<dbReference type="InterPro" id="IPR041590">
    <property type="entry name" value="SepRS_C"/>
</dbReference>
<dbReference type="NCBIfam" id="TIGR00470">
    <property type="entry name" value="sepS"/>
    <property type="match status" value="1"/>
</dbReference>
<dbReference type="Pfam" id="PF18006">
    <property type="entry name" value="SepRS_C"/>
    <property type="match status" value="1"/>
</dbReference>
<dbReference type="Pfam" id="PF01409">
    <property type="entry name" value="tRNA-synt_2d"/>
    <property type="match status" value="1"/>
</dbReference>
<dbReference type="SUPFAM" id="SSF55681">
    <property type="entry name" value="Class II aaRS and biotin synthetases"/>
    <property type="match status" value="1"/>
</dbReference>
<dbReference type="PROSITE" id="PS50862">
    <property type="entry name" value="AA_TRNA_LIGASE_II"/>
    <property type="match status" value="1"/>
</dbReference>
<reference key="1">
    <citation type="journal article" date="2006" name="Science">
        <title>Genome of rice cluster I archaea -- the key methane producers in the rice rhizosphere.</title>
        <authorList>
            <person name="Erkel C."/>
            <person name="Kube M."/>
            <person name="Reinhardt R."/>
            <person name="Liesack W."/>
        </authorList>
    </citation>
    <scope>NUCLEOTIDE SEQUENCE [LARGE SCALE GENOMIC DNA]</scope>
    <source>
        <strain>DSM 22066 / NBRC 105507 / MRE50</strain>
    </source>
</reference>
<protein>
    <recommendedName>
        <fullName evidence="1">O-phosphoserine--tRNA(Cys) ligase</fullName>
        <shortName evidence="1">O-phosphoserine--tRNA ligase</shortName>
        <ecNumber evidence="1">6.1.1.27</ecNumber>
    </recommendedName>
    <alternativeName>
        <fullName evidence="1">Non-canonical O-phosphoseryl-tRNA(Cys) synthetase</fullName>
    </alternativeName>
    <alternativeName>
        <fullName evidence="1">O-phosphoseryl-tRNA(Cys) synthetase</fullName>
        <shortName evidence="1">SepRS</shortName>
    </alternativeName>
</protein>
<accession>Q0W0T4</accession>
<comment type="function">
    <text evidence="1">Catalyzes the attachment of O-phosphoserine (Sep) to tRNA(Cys).</text>
</comment>
<comment type="catalytic activity">
    <reaction evidence="1">
        <text>tRNA(Cys) + O-phospho-L-serine + ATP = O-phospho-L-seryl-tRNA(Cys) + AMP + diphosphate</text>
        <dbReference type="Rhea" id="RHEA:25678"/>
        <dbReference type="Rhea" id="RHEA-COMP:9661"/>
        <dbReference type="Rhea" id="RHEA-COMP:9719"/>
        <dbReference type="ChEBI" id="CHEBI:30616"/>
        <dbReference type="ChEBI" id="CHEBI:33019"/>
        <dbReference type="ChEBI" id="CHEBI:57524"/>
        <dbReference type="ChEBI" id="CHEBI:78442"/>
        <dbReference type="ChEBI" id="CHEBI:78551"/>
        <dbReference type="ChEBI" id="CHEBI:456215"/>
        <dbReference type="EC" id="6.1.1.27"/>
    </reaction>
</comment>
<comment type="subunit">
    <text evidence="1">Homotetramer. Interacts with SepCysS.</text>
</comment>
<comment type="similarity">
    <text evidence="1">Belongs to the class-II aminoacyl-tRNA synthetase family. O-phosphoseryl-tRNA(Cys) synthetase subfamily.</text>
</comment>
<proteinExistence type="inferred from homology"/>
<organism>
    <name type="scientific">Methanocella arvoryzae (strain DSM 22066 / NBRC 105507 / MRE50)</name>
    <dbReference type="NCBI Taxonomy" id="351160"/>
    <lineage>
        <taxon>Archaea</taxon>
        <taxon>Methanobacteriati</taxon>
        <taxon>Methanobacteriota</taxon>
        <taxon>Stenosarchaea group</taxon>
        <taxon>Methanomicrobia</taxon>
        <taxon>Methanocellales</taxon>
        <taxon>Methanocellaceae</taxon>
        <taxon>Methanocella</taxon>
    </lineage>
</organism>
<feature type="chain" id="PRO_0000363764" description="O-phosphoserine--tRNA(Cys) ligase">
    <location>
        <begin position="1"/>
        <end position="532"/>
    </location>
</feature>
<feature type="binding site" evidence="1">
    <location>
        <begin position="188"/>
        <end position="190"/>
    </location>
    <ligand>
        <name>substrate</name>
    </ligand>
</feature>
<feature type="binding site" evidence="1">
    <location>
        <begin position="233"/>
        <end position="235"/>
    </location>
    <ligand>
        <name>substrate</name>
    </ligand>
</feature>
<feature type="binding site" evidence="1">
    <location>
        <begin position="275"/>
        <end position="276"/>
    </location>
    <ligand>
        <name>substrate</name>
    </ligand>
</feature>
<feature type="binding site" evidence="1">
    <location>
        <position position="327"/>
    </location>
    <ligand>
        <name>substrate</name>
    </ligand>
</feature>